<protein>
    <recommendedName>
        <fullName>Integrase</fullName>
        <ecNumber evidence="1">2.7.7.-</ecNumber>
        <ecNumber evidence="1">3.1.-.-</ecNumber>
    </recommendedName>
</protein>
<keyword id="KW-0229">DNA integration</keyword>
<keyword id="KW-0233">DNA recombination</keyword>
<keyword id="KW-0238">DNA-binding</keyword>
<keyword id="KW-0378">Hydrolase</keyword>
<keyword id="KW-1185">Reference proteome</keyword>
<keyword id="KW-0808">Transferase</keyword>
<keyword id="KW-1179">Viral genome integration</keyword>
<keyword id="KW-1160">Virus entry into host cell</keyword>
<organism>
    <name type="scientific">Escherichia phage 186</name>
    <name type="common">Bacteriophage 186</name>
    <dbReference type="NCBI Taxonomy" id="29252"/>
    <lineage>
        <taxon>Viruses</taxon>
        <taxon>Duplodnaviria</taxon>
        <taxon>Heunggongvirae</taxon>
        <taxon>Uroviricota</taxon>
        <taxon>Caudoviricetes</taxon>
        <taxon>Peduoviridae</taxon>
        <taxon>Eganvirus</taxon>
    </lineage>
</organism>
<feature type="chain" id="PRO_0000197522" description="Integrase">
    <location>
        <begin position="1"/>
        <end position="336"/>
    </location>
</feature>
<feature type="domain" description="Core-binding (CB)" evidence="3">
    <location>
        <begin position="55"/>
        <end position="143"/>
    </location>
</feature>
<feature type="domain" description="Tyr recombinase" evidence="2">
    <location>
        <begin position="165"/>
        <end position="325"/>
    </location>
</feature>
<feature type="active site" evidence="2">
    <location>
        <position position="203"/>
    </location>
</feature>
<feature type="active site" evidence="2">
    <location>
        <position position="226"/>
    </location>
</feature>
<feature type="active site" evidence="2">
    <location>
        <position position="277"/>
    </location>
</feature>
<feature type="active site" evidence="2">
    <location>
        <position position="280"/>
    </location>
</feature>
<feature type="active site" evidence="2">
    <location>
        <position position="303"/>
    </location>
</feature>
<feature type="active site" description="O-(3'-phospho-DNA)-tyrosine intermediate" evidence="2">
    <location>
        <position position="312"/>
    </location>
</feature>
<dbReference type="EC" id="2.7.7.-" evidence="1"/>
<dbReference type="EC" id="3.1.-.-" evidence="1"/>
<dbReference type="EMBL" id="U32222">
    <property type="protein sequence ID" value="AAC34175.1"/>
    <property type="molecule type" value="Genomic_DNA"/>
</dbReference>
<dbReference type="PIR" id="S09532">
    <property type="entry name" value="S09532"/>
</dbReference>
<dbReference type="RefSeq" id="NP_052278.1">
    <property type="nucleotide sequence ID" value="NC_001317.1"/>
</dbReference>
<dbReference type="SMR" id="P06723"/>
<dbReference type="GeneID" id="1262438"/>
<dbReference type="KEGG" id="vg:1262438"/>
<dbReference type="OrthoDB" id="3956at10239"/>
<dbReference type="Proteomes" id="UP000000369">
    <property type="component" value="Segment"/>
</dbReference>
<dbReference type="GO" id="GO:0003677">
    <property type="term" value="F:DNA binding"/>
    <property type="evidence" value="ECO:0007669"/>
    <property type="project" value="UniProtKB-KW"/>
</dbReference>
<dbReference type="GO" id="GO:0016787">
    <property type="term" value="F:hydrolase activity"/>
    <property type="evidence" value="ECO:0007669"/>
    <property type="project" value="UniProtKB-KW"/>
</dbReference>
<dbReference type="GO" id="GO:0016740">
    <property type="term" value="F:transferase activity"/>
    <property type="evidence" value="ECO:0007669"/>
    <property type="project" value="UniProtKB-KW"/>
</dbReference>
<dbReference type="GO" id="GO:0015074">
    <property type="term" value="P:DNA integration"/>
    <property type="evidence" value="ECO:0007669"/>
    <property type="project" value="UniProtKB-KW"/>
</dbReference>
<dbReference type="GO" id="GO:0006310">
    <property type="term" value="P:DNA recombination"/>
    <property type="evidence" value="ECO:0007669"/>
    <property type="project" value="UniProtKB-KW"/>
</dbReference>
<dbReference type="GO" id="GO:0075713">
    <property type="term" value="P:establishment of integrated proviral latency"/>
    <property type="evidence" value="ECO:0007669"/>
    <property type="project" value="UniProtKB-KW"/>
</dbReference>
<dbReference type="GO" id="GO:0046718">
    <property type="term" value="P:symbiont entry into host cell"/>
    <property type="evidence" value="ECO:0007669"/>
    <property type="project" value="UniProtKB-KW"/>
</dbReference>
<dbReference type="GO" id="GO:0044826">
    <property type="term" value="P:viral genome integration into host DNA"/>
    <property type="evidence" value="ECO:0007669"/>
    <property type="project" value="UniProtKB-KW"/>
</dbReference>
<dbReference type="CDD" id="cd00796">
    <property type="entry name" value="INT_Rci_Hp1_C"/>
    <property type="match status" value="1"/>
</dbReference>
<dbReference type="Gene3D" id="1.10.443.10">
    <property type="entry name" value="Intergrase catalytic core"/>
    <property type="match status" value="1"/>
</dbReference>
<dbReference type="InterPro" id="IPR044068">
    <property type="entry name" value="CB"/>
</dbReference>
<dbReference type="InterPro" id="IPR011010">
    <property type="entry name" value="DNA_brk_join_enz"/>
</dbReference>
<dbReference type="InterPro" id="IPR013762">
    <property type="entry name" value="Integrase-like_cat_sf"/>
</dbReference>
<dbReference type="InterPro" id="IPR002104">
    <property type="entry name" value="Integrase_catalytic"/>
</dbReference>
<dbReference type="InterPro" id="IPR050090">
    <property type="entry name" value="Tyrosine_recombinase_XerCD"/>
</dbReference>
<dbReference type="PANTHER" id="PTHR30349:SF93">
    <property type="entry name" value="FELS-2 PROPHAGE PROTEIN"/>
    <property type="match status" value="1"/>
</dbReference>
<dbReference type="PANTHER" id="PTHR30349">
    <property type="entry name" value="PHAGE INTEGRASE-RELATED"/>
    <property type="match status" value="1"/>
</dbReference>
<dbReference type="Pfam" id="PF24624">
    <property type="entry name" value="Int_N"/>
    <property type="match status" value="1"/>
</dbReference>
<dbReference type="Pfam" id="PF00589">
    <property type="entry name" value="Phage_integrase"/>
    <property type="match status" value="2"/>
</dbReference>
<dbReference type="SUPFAM" id="SSF56349">
    <property type="entry name" value="DNA breaking-rejoining enzymes"/>
    <property type="match status" value="1"/>
</dbReference>
<dbReference type="PROSITE" id="PS51900">
    <property type="entry name" value="CB"/>
    <property type="match status" value="1"/>
</dbReference>
<dbReference type="PROSITE" id="PS51898">
    <property type="entry name" value="TYR_RECOMBINASE"/>
    <property type="match status" value="1"/>
</dbReference>
<reference key="1">
    <citation type="journal article" date="1986" name="J. Mol. Biol.">
        <title>Control of gene expression in the P2-related template coliphages. III. DNA sequence of the major control region of phage 186.</title>
        <authorList>
            <person name="Kalionis B."/>
            <person name="Dodd I.B."/>
            <person name="Egan J.B."/>
        </authorList>
    </citation>
    <scope>NUCLEOTIDE SEQUENCE [GENOMIC DNA]</scope>
    <source>
        <strain>186CITSP</strain>
    </source>
</reference>
<sequence>MTVRKNPAGGWICELYPNGAKGKRIRKKFATKGEALAFEQYTVQNPWQEEKEDRRTLKELVDSWYSAHGITLKDGLKRQLAMHHAFECMGEPLARDFDAQMFSRYREKRLKGEYARSNRVKEVSPRTLNLELAYFRAVFNELNRLGEWKGENPLKNMRPFRTEEMEMTWLTHDQISQLLGECNRHDHPDLETVVRICLATGARWSEAESLRKSQLAKYKITYTNTKGRKNRTVPISKELYESLPDDKKGRLFSDCYGAFRSALERTGIELPAGQLTHVLRHTFASHFMMNGGNILVLQRVLGHTDIKMTMRYAHFAPDHLEDAVKLNPLVHITNSK</sequence>
<proteinExistence type="inferred from homology"/>
<organismHost>
    <name type="scientific">Escherichia coli</name>
    <dbReference type="NCBI Taxonomy" id="562"/>
</organismHost>
<gene>
    <name type="primary">int</name>
</gene>
<comment type="function">
    <text>Integrase is necessary for integration of the phage into the host genome by site-specific recombination. In conjunction with excisionase, integrase is also necessary for excision of the prophage from the host genome.</text>
</comment>
<comment type="similarity">
    <text evidence="4">Belongs to the 'phage' integrase family.</text>
</comment>
<accession>P06723</accession>
<evidence type="ECO:0000250" key="1">
    <source>
        <dbReference type="UniProtKB" id="P03700"/>
    </source>
</evidence>
<evidence type="ECO:0000255" key="2">
    <source>
        <dbReference type="PROSITE-ProRule" id="PRU01246"/>
    </source>
</evidence>
<evidence type="ECO:0000255" key="3">
    <source>
        <dbReference type="PROSITE-ProRule" id="PRU01248"/>
    </source>
</evidence>
<evidence type="ECO:0000305" key="4"/>
<name>VINT_BP186</name>